<keyword id="KW-0119">Carbohydrate metabolism</keyword>
<keyword id="KW-0963">Cytoplasm</keyword>
<keyword id="KW-0294">Fucose metabolism</keyword>
<keyword id="KW-0413">Isomerase</keyword>
<keyword id="KW-1185">Reference proteome</keyword>
<gene>
    <name evidence="1" type="primary">fucU</name>
    <name type="ordered locus">SbBS512_E3066</name>
</gene>
<sequence>MLKTISPLISPELLKVLAEMGHGDEIIFSDAHFPAHSMGPQVIRADGLLVSDLLQAIIPLFELDSYAPPLVMMAAVEGDTLDPEVERRYRNALSLQAPCPDIIRINRFAFYERAQKAFAIVITGERAKYGNILLKKGVTP</sequence>
<comment type="function">
    <text evidence="1">Involved in the anomeric conversion of L-fucose.</text>
</comment>
<comment type="catalytic activity">
    <reaction evidence="1">
        <text>alpha-L-fucose = beta-L-fucose</text>
        <dbReference type="Rhea" id="RHEA:25580"/>
        <dbReference type="ChEBI" id="CHEBI:42548"/>
        <dbReference type="ChEBI" id="CHEBI:42589"/>
        <dbReference type="EC" id="5.1.3.29"/>
    </reaction>
</comment>
<comment type="pathway">
    <text evidence="1">Carbohydrate metabolism; L-fucose metabolism.</text>
</comment>
<comment type="subunit">
    <text evidence="1">Homodecamer.</text>
</comment>
<comment type="subcellular location">
    <subcellularLocation>
        <location evidence="1">Cytoplasm</location>
    </subcellularLocation>
</comment>
<comment type="similarity">
    <text evidence="1">Belongs to the RbsD / FucU family. FucU mutarotase subfamily.</text>
</comment>
<organism>
    <name type="scientific">Shigella boydii serotype 18 (strain CDC 3083-94 / BS512)</name>
    <dbReference type="NCBI Taxonomy" id="344609"/>
    <lineage>
        <taxon>Bacteria</taxon>
        <taxon>Pseudomonadati</taxon>
        <taxon>Pseudomonadota</taxon>
        <taxon>Gammaproteobacteria</taxon>
        <taxon>Enterobacterales</taxon>
        <taxon>Enterobacteriaceae</taxon>
        <taxon>Shigella</taxon>
    </lineage>
</organism>
<feature type="chain" id="PRO_1000187204" description="L-fucose mutarotase">
    <location>
        <begin position="1"/>
        <end position="140"/>
    </location>
</feature>
<feature type="active site" description="Proton donor" evidence="1">
    <location>
        <position position="22"/>
    </location>
</feature>
<feature type="binding site" evidence="1">
    <location>
        <position position="30"/>
    </location>
    <ligand>
        <name>substrate</name>
    </ligand>
</feature>
<feature type="binding site" evidence="1">
    <location>
        <position position="107"/>
    </location>
    <ligand>
        <name>substrate</name>
    </ligand>
</feature>
<feature type="binding site" evidence="1">
    <location>
        <begin position="129"/>
        <end position="131"/>
    </location>
    <ligand>
        <name>substrate</name>
    </ligand>
</feature>
<reference key="1">
    <citation type="submission" date="2008-05" db="EMBL/GenBank/DDBJ databases">
        <title>Complete sequence of Shigella boydii serotype 18 strain BS512.</title>
        <authorList>
            <person name="Rasko D.A."/>
            <person name="Rosovitz M."/>
            <person name="Maurelli A.T."/>
            <person name="Myers G."/>
            <person name="Seshadri R."/>
            <person name="Cer R."/>
            <person name="Jiang L."/>
            <person name="Ravel J."/>
            <person name="Sebastian Y."/>
        </authorList>
    </citation>
    <scope>NUCLEOTIDE SEQUENCE [LARGE SCALE GENOMIC DNA]</scope>
    <source>
        <strain>CDC 3083-94 / BS512</strain>
    </source>
</reference>
<protein>
    <recommendedName>
        <fullName evidence="1">L-fucose mutarotase</fullName>
        <ecNumber evidence="1">5.1.3.29</ecNumber>
    </recommendedName>
    <alternativeName>
        <fullName evidence="1">Fucose 1-epimerase</fullName>
    </alternativeName>
    <alternativeName>
        <fullName evidence="1">Type-2 mutarotase</fullName>
    </alternativeName>
</protein>
<evidence type="ECO:0000255" key="1">
    <source>
        <dbReference type="HAMAP-Rule" id="MF_01662"/>
    </source>
</evidence>
<dbReference type="EC" id="5.1.3.29" evidence="1"/>
<dbReference type="EMBL" id="CP001063">
    <property type="protein sequence ID" value="ACD10207.1"/>
    <property type="molecule type" value="Genomic_DNA"/>
</dbReference>
<dbReference type="RefSeq" id="WP_000920840.1">
    <property type="nucleotide sequence ID" value="NC_010658.1"/>
</dbReference>
<dbReference type="SMR" id="B2TZD0"/>
<dbReference type="STRING" id="344609.SbBS512_E3066"/>
<dbReference type="GeneID" id="93779194"/>
<dbReference type="KEGG" id="sbc:SbBS512_E3066"/>
<dbReference type="HOGENOM" id="CLU_120075_1_0_6"/>
<dbReference type="UniPathway" id="UPA00956"/>
<dbReference type="Proteomes" id="UP000001030">
    <property type="component" value="Chromosome"/>
</dbReference>
<dbReference type="GO" id="GO:0005737">
    <property type="term" value="C:cytoplasm"/>
    <property type="evidence" value="ECO:0007669"/>
    <property type="project" value="UniProtKB-SubCell"/>
</dbReference>
<dbReference type="GO" id="GO:0042806">
    <property type="term" value="F:fucose binding"/>
    <property type="evidence" value="ECO:0007669"/>
    <property type="project" value="InterPro"/>
</dbReference>
<dbReference type="GO" id="GO:0036373">
    <property type="term" value="F:L-fucose mutarotase activity"/>
    <property type="evidence" value="ECO:0007669"/>
    <property type="project" value="UniProtKB-EC"/>
</dbReference>
<dbReference type="GO" id="GO:0036065">
    <property type="term" value="P:fucosylation"/>
    <property type="evidence" value="ECO:0007669"/>
    <property type="project" value="TreeGrafter"/>
</dbReference>
<dbReference type="GO" id="GO:0042354">
    <property type="term" value="P:L-fucose metabolic process"/>
    <property type="evidence" value="ECO:0007669"/>
    <property type="project" value="UniProtKB-UniRule"/>
</dbReference>
<dbReference type="FunFam" id="3.40.1650.10:FF:000001">
    <property type="entry name" value="L-fucose mutarotase"/>
    <property type="match status" value="1"/>
</dbReference>
<dbReference type="Gene3D" id="3.40.1650.10">
    <property type="entry name" value="RbsD-like domain"/>
    <property type="match status" value="1"/>
</dbReference>
<dbReference type="HAMAP" id="MF_01662">
    <property type="entry name" value="L_fucose_rotase"/>
    <property type="match status" value="1"/>
</dbReference>
<dbReference type="InterPro" id="IPR023751">
    <property type="entry name" value="L-fucose_mutarotase"/>
</dbReference>
<dbReference type="InterPro" id="IPR023750">
    <property type="entry name" value="RbsD-like_sf"/>
</dbReference>
<dbReference type="InterPro" id="IPR050443">
    <property type="entry name" value="RbsD/FucU_mutarotase"/>
</dbReference>
<dbReference type="InterPro" id="IPR007721">
    <property type="entry name" value="RbsD_FucU"/>
</dbReference>
<dbReference type="NCBIfam" id="NF011949">
    <property type="entry name" value="PRK15420.1"/>
    <property type="match status" value="1"/>
</dbReference>
<dbReference type="PANTHER" id="PTHR31690">
    <property type="entry name" value="FUCOSE MUTAROTASE"/>
    <property type="match status" value="1"/>
</dbReference>
<dbReference type="PANTHER" id="PTHR31690:SF4">
    <property type="entry name" value="FUCOSE MUTAROTASE"/>
    <property type="match status" value="1"/>
</dbReference>
<dbReference type="Pfam" id="PF05025">
    <property type="entry name" value="RbsD_FucU"/>
    <property type="match status" value="1"/>
</dbReference>
<dbReference type="SUPFAM" id="SSF102546">
    <property type="entry name" value="RbsD-like"/>
    <property type="match status" value="1"/>
</dbReference>
<accession>B2TZD0</accession>
<proteinExistence type="inferred from homology"/>
<name>FUCM_SHIB3</name>